<evidence type="ECO:0000305" key="1"/>
<name>FINO_ECOLI</name>
<gene>
    <name type="primary">finO</name>
</gene>
<dbReference type="EMBL" id="X57429">
    <property type="protein sequence ID" value="CAA40676.1"/>
    <property type="molecule type" value="Genomic_DNA"/>
</dbReference>
<dbReference type="EMBL" id="M38047">
    <property type="protein sequence ID" value="AAA98092.1"/>
    <property type="molecule type" value="Genomic_DNA"/>
</dbReference>
<dbReference type="EMBL" id="U01159">
    <property type="protein sequence ID" value="AAC44176.1"/>
    <property type="molecule type" value="Genomic_DNA"/>
</dbReference>
<dbReference type="EMBL" id="AP001918">
    <property type="status" value="NOT_ANNOTATED_CDS"/>
    <property type="molecule type" value="Genomic_DNA"/>
</dbReference>
<dbReference type="EMBL" id="U50705">
    <property type="protein sequence ID" value="AAC44289.1"/>
    <property type="molecule type" value="Genomic_DNA"/>
</dbReference>
<dbReference type="PIR" id="JQ1339">
    <property type="entry name" value="JQ1339"/>
</dbReference>
<dbReference type="SMR" id="P22707"/>
<dbReference type="GO" id="GO:0003723">
    <property type="term" value="F:RNA binding"/>
    <property type="evidence" value="ECO:0007669"/>
    <property type="project" value="UniProtKB-KW"/>
</dbReference>
<dbReference type="CDD" id="cd00236">
    <property type="entry name" value="FinO_conjug_rep"/>
    <property type="match status" value="1"/>
</dbReference>
<dbReference type="Gene3D" id="1.10.1710.10">
    <property type="entry name" value="ProQ/FinO domain"/>
    <property type="match status" value="1"/>
</dbReference>
<dbReference type="InterPro" id="IPR021065">
    <property type="entry name" value="Fertility_inhibition_FinO_N"/>
</dbReference>
<dbReference type="InterPro" id="IPR016103">
    <property type="entry name" value="ProQ/FinO"/>
</dbReference>
<dbReference type="InterPro" id="IPR036442">
    <property type="entry name" value="ProQ/FinO_sf"/>
</dbReference>
<dbReference type="NCBIfam" id="NF010317">
    <property type="entry name" value="PRK13754.1"/>
    <property type="match status" value="1"/>
</dbReference>
<dbReference type="Pfam" id="PF12602">
    <property type="entry name" value="FinO_N"/>
    <property type="match status" value="1"/>
</dbReference>
<dbReference type="Pfam" id="PF04352">
    <property type="entry name" value="ProQ"/>
    <property type="match status" value="1"/>
</dbReference>
<dbReference type="SMART" id="SM00945">
    <property type="entry name" value="ProQ"/>
    <property type="match status" value="1"/>
</dbReference>
<dbReference type="SUPFAM" id="SSF48657">
    <property type="entry name" value="FinO-like"/>
    <property type="match status" value="1"/>
</dbReference>
<keyword id="KW-0184">Conjugation</keyword>
<keyword id="KW-0614">Plasmid</keyword>
<keyword id="KW-0678">Repressor</keyword>
<keyword id="KW-0694">RNA-binding</keyword>
<keyword id="KW-0804">Transcription</keyword>
<keyword id="KW-0805">Transcription regulation</keyword>
<protein>
    <recommendedName>
        <fullName>Fertility inhibition protein</fullName>
    </recommendedName>
    <alternativeName>
        <fullName>Conjugal transfer repressor</fullName>
    </alternativeName>
</protein>
<sequence length="186" mass="21222">MTEQKRPVLTLKRKTEGETLVRSRKTIINVTTPPKWKVKKQKLAEKAAREAELAAKKAQARQALSIYLNLPTLDDAVNTLKPWWPGLFDGDTPRLLACGIRDVLLEDVAQRNIPLSHKKLRRALKAITRSESYLCAMKAGACRYDTEGYVTEHISQEEEAYAAERLDKIRRQNRIKAELQAVLDEK</sequence>
<proteinExistence type="inferred from homology"/>
<organism>
    <name type="scientific">Escherichia coli (strain K12)</name>
    <dbReference type="NCBI Taxonomy" id="83333"/>
    <lineage>
        <taxon>Bacteria</taxon>
        <taxon>Pseudomonadati</taxon>
        <taxon>Pseudomonadota</taxon>
        <taxon>Gammaproteobacteria</taxon>
        <taxon>Enterobacterales</taxon>
        <taxon>Enterobacteriaceae</taxon>
        <taxon>Escherichia</taxon>
    </lineage>
</organism>
<accession>P22707</accession>
<feature type="chain" id="PRO_0000068349" description="Fertility inhibition protein">
    <location>
        <begin position="1"/>
        <end position="186"/>
    </location>
</feature>
<feature type="sequence conflict" description="In Ref. 1; CAA40676." evidence="1" ref="1">
    <original>S</original>
    <variation>SS</variation>
    <location>
        <position position="132"/>
    </location>
</feature>
<comment type="function">
    <text>One of the components on the FinOP fertility inhibition complex, which inhibits the expression of traJ gene, which in turn regulates the expression of some 20 transfer genes. The transfer genes are responsible for the process, called conjugal transfer, in which DNA is transmitted from one bacterial host to another. RNA-binding that interacts with the traJ mRNA and its antisense RNA, finP, stabilizing finP against endonucleolytic degradation and facilitating sense-antisense RNA recognition.</text>
</comment>
<comment type="similarity">
    <text evidence="1">Belongs to the FinO family.</text>
</comment>
<comment type="caution">
    <text evidence="1">In strain K12 / CR63, finO is interrupted by an IS3 element.</text>
</comment>
<reference key="1">
    <citation type="journal article" date="1990" name="J. Mol. Biol.">
        <title>Nucleotide sequence of the promoter-distal region of the tra operon of plasmid R100, including traI (DNA helicase I) and traD genes.</title>
        <authorList>
            <person name="Yoshioka Y."/>
            <person name="Fujita Y."/>
            <person name="Ohtsubo E."/>
        </authorList>
    </citation>
    <scope>NUCLEOTIDE SEQUENCE [GENOMIC DNA]</scope>
</reference>
<reference key="2">
    <citation type="journal article" date="1991" name="Gene">
        <title>Sequence and conservation of genes at the distal end of the transfer region on plasmids F and R6-5.</title>
        <authorList>
            <person name="Cram D.S."/>
            <person name="Loh S.M."/>
            <person name="Cheah K.C."/>
            <person name="Skurray R.A."/>
        </authorList>
    </citation>
    <scope>NUCLEOTIDE SEQUENCE [GENOMIC DNA]</scope>
</reference>
<reference key="3">
    <citation type="journal article" date="1994" name="Microbiol. Rev.">
        <title>Analysis of the sequence and gene products of the transfer region of the F sex factor.</title>
        <authorList>
            <person name="Frost L.S."/>
            <person name="Ippen-Ihler K."/>
            <person name="Skurray R.A."/>
        </authorList>
    </citation>
    <scope>NUCLEOTIDE SEQUENCE [GENOMIC DNA]</scope>
</reference>
<reference key="4">
    <citation type="submission" date="2000-04" db="EMBL/GenBank/DDBJ databases">
        <title>Complete nucleotide sequence of the F plasmid: its implications for organization and diversification of plasmid genomes.</title>
        <authorList>
            <person name="Shimizu H."/>
            <person name="Saitoh Y."/>
            <person name="Suda Y."/>
            <person name="Uehara K."/>
            <person name="Sampei G."/>
            <person name="Mizobuchi K."/>
        </authorList>
    </citation>
    <scope>NUCLEOTIDE SEQUENCE [LARGE SCALE GENOMIC DNA]</scope>
    <source>
        <strain>K12 / CR63</strain>
    </source>
</reference>
<reference key="5">
    <citation type="journal article" date="1996" name="Genetics">
        <title>Mosaic structure of plasmids from natural populations of Escherichia coli.</title>
        <authorList>
            <person name="Boyd E.F."/>
            <person name="Hill C.W."/>
            <person name="Rich S.M."/>
            <person name="Hartl D.L."/>
        </authorList>
    </citation>
    <scope>NUCLEOTIDE SEQUENCE [GENOMIC DNA] OF 23-169</scope>
    <source>
        <strain>ECOR 71</strain>
    </source>
</reference>
<geneLocation type="plasmid">
    <name>F</name>
</geneLocation>